<organism>
    <name type="scientific">Neotamias panamintinus</name>
    <name type="common">Panamint chipmunk</name>
    <name type="synonym">Tamias panamintinus</name>
    <dbReference type="NCBI Taxonomy" id="3370381"/>
    <lineage>
        <taxon>Eukaryota</taxon>
        <taxon>Metazoa</taxon>
        <taxon>Chordata</taxon>
        <taxon>Craniata</taxon>
        <taxon>Vertebrata</taxon>
        <taxon>Euteleostomi</taxon>
        <taxon>Mammalia</taxon>
        <taxon>Eutheria</taxon>
        <taxon>Euarchontoglires</taxon>
        <taxon>Glires</taxon>
        <taxon>Rodentia</taxon>
        <taxon>Sciuromorpha</taxon>
        <taxon>Sciuridae</taxon>
        <taxon>Xerinae</taxon>
        <taxon>Marmotini</taxon>
        <taxon>Neotamias</taxon>
    </lineage>
</organism>
<name>CYB_NEOPM</name>
<reference key="1">
    <citation type="journal article" date="2001" name="Mol. Phylogenet. Evol.">
        <title>Molecular phylogeny of the chipmunks inferred from mitochondrial cytochrome b and cytochrome oxidase II gene sequences.</title>
        <authorList>
            <person name="Piaggio A.J."/>
            <person name="Spicer G.S."/>
        </authorList>
    </citation>
    <scope>NUCLEOTIDE SEQUENCE [GENOMIC DNA]</scope>
</reference>
<comment type="function">
    <text evidence="2">Component of the ubiquinol-cytochrome c reductase complex (complex III or cytochrome b-c1 complex) that is part of the mitochondrial respiratory chain. The b-c1 complex mediates electron transfer from ubiquinol to cytochrome c. Contributes to the generation of a proton gradient across the mitochondrial membrane that is then used for ATP synthesis.</text>
</comment>
<comment type="cofactor">
    <cofactor evidence="2">
        <name>heme b</name>
        <dbReference type="ChEBI" id="CHEBI:60344"/>
    </cofactor>
    <text evidence="2">Binds 2 heme b groups non-covalently.</text>
</comment>
<comment type="subunit">
    <text evidence="2">The cytochrome bc1 complex contains 11 subunits: 3 respiratory subunits (MT-CYB, CYC1 and UQCRFS1), 2 core proteins (UQCRC1 and UQCRC2) and 6 low-molecular weight proteins (UQCRH/QCR6, UQCRB/QCR7, UQCRQ/QCR8, UQCR10/QCR9, UQCR11/QCR10 and a cleavage product of UQCRFS1). This cytochrome bc1 complex then forms a dimer.</text>
</comment>
<comment type="subcellular location">
    <subcellularLocation>
        <location evidence="2">Mitochondrion inner membrane</location>
        <topology evidence="2">Multi-pass membrane protein</topology>
    </subcellularLocation>
</comment>
<comment type="miscellaneous">
    <text evidence="1">Heme 1 (or BL or b562) is low-potential and absorbs at about 562 nm, and heme 2 (or BH or b566) is high-potential and absorbs at about 566 nm.</text>
</comment>
<comment type="similarity">
    <text evidence="3 4">Belongs to the cytochrome b family.</text>
</comment>
<comment type="caution">
    <text evidence="2">The full-length protein contains only eight transmembrane helices, not nine as predicted by bioinformatics tools.</text>
</comment>
<geneLocation type="mitochondrion"/>
<accession>Q7IYZ1</accession>
<dbReference type="EMBL" id="AF147656">
    <property type="protein sequence ID" value="AAL14055.1"/>
    <property type="molecule type" value="Genomic_DNA"/>
</dbReference>
<dbReference type="SMR" id="Q7IYZ1"/>
<dbReference type="GO" id="GO:0005743">
    <property type="term" value="C:mitochondrial inner membrane"/>
    <property type="evidence" value="ECO:0007669"/>
    <property type="project" value="UniProtKB-SubCell"/>
</dbReference>
<dbReference type="GO" id="GO:0045275">
    <property type="term" value="C:respiratory chain complex III"/>
    <property type="evidence" value="ECO:0007669"/>
    <property type="project" value="InterPro"/>
</dbReference>
<dbReference type="GO" id="GO:0046872">
    <property type="term" value="F:metal ion binding"/>
    <property type="evidence" value="ECO:0007669"/>
    <property type="project" value="UniProtKB-KW"/>
</dbReference>
<dbReference type="GO" id="GO:0008121">
    <property type="term" value="F:ubiquinol-cytochrome-c reductase activity"/>
    <property type="evidence" value="ECO:0007669"/>
    <property type="project" value="InterPro"/>
</dbReference>
<dbReference type="GO" id="GO:0006122">
    <property type="term" value="P:mitochondrial electron transport, ubiquinol to cytochrome c"/>
    <property type="evidence" value="ECO:0007669"/>
    <property type="project" value="TreeGrafter"/>
</dbReference>
<dbReference type="CDD" id="cd00290">
    <property type="entry name" value="cytochrome_b_C"/>
    <property type="match status" value="1"/>
</dbReference>
<dbReference type="CDD" id="cd00284">
    <property type="entry name" value="Cytochrome_b_N"/>
    <property type="match status" value="1"/>
</dbReference>
<dbReference type="FunFam" id="1.20.810.10:FF:000002">
    <property type="entry name" value="Cytochrome b"/>
    <property type="match status" value="1"/>
</dbReference>
<dbReference type="Gene3D" id="1.20.810.10">
    <property type="entry name" value="Cytochrome Bc1 Complex, Chain C"/>
    <property type="match status" value="1"/>
</dbReference>
<dbReference type="InterPro" id="IPR005798">
    <property type="entry name" value="Cyt_b/b6_C"/>
</dbReference>
<dbReference type="InterPro" id="IPR036150">
    <property type="entry name" value="Cyt_b/b6_C_sf"/>
</dbReference>
<dbReference type="InterPro" id="IPR005797">
    <property type="entry name" value="Cyt_b/b6_N"/>
</dbReference>
<dbReference type="InterPro" id="IPR027387">
    <property type="entry name" value="Cytb/b6-like_sf"/>
</dbReference>
<dbReference type="InterPro" id="IPR030689">
    <property type="entry name" value="Cytochrome_b"/>
</dbReference>
<dbReference type="InterPro" id="IPR048260">
    <property type="entry name" value="Cytochrome_b_C_euk/bac"/>
</dbReference>
<dbReference type="InterPro" id="IPR048259">
    <property type="entry name" value="Cytochrome_b_N_euk/bac"/>
</dbReference>
<dbReference type="InterPro" id="IPR016174">
    <property type="entry name" value="Di-haem_cyt_TM"/>
</dbReference>
<dbReference type="PANTHER" id="PTHR19271">
    <property type="entry name" value="CYTOCHROME B"/>
    <property type="match status" value="1"/>
</dbReference>
<dbReference type="PANTHER" id="PTHR19271:SF16">
    <property type="entry name" value="CYTOCHROME B"/>
    <property type="match status" value="1"/>
</dbReference>
<dbReference type="Pfam" id="PF00032">
    <property type="entry name" value="Cytochrom_B_C"/>
    <property type="match status" value="1"/>
</dbReference>
<dbReference type="Pfam" id="PF00033">
    <property type="entry name" value="Cytochrome_B"/>
    <property type="match status" value="1"/>
</dbReference>
<dbReference type="PIRSF" id="PIRSF038885">
    <property type="entry name" value="COB"/>
    <property type="match status" value="1"/>
</dbReference>
<dbReference type="SUPFAM" id="SSF81648">
    <property type="entry name" value="a domain/subunit of cytochrome bc1 complex (Ubiquinol-cytochrome c reductase)"/>
    <property type="match status" value="1"/>
</dbReference>
<dbReference type="SUPFAM" id="SSF81342">
    <property type="entry name" value="Transmembrane di-heme cytochromes"/>
    <property type="match status" value="1"/>
</dbReference>
<dbReference type="PROSITE" id="PS51003">
    <property type="entry name" value="CYTB_CTER"/>
    <property type="match status" value="1"/>
</dbReference>
<dbReference type="PROSITE" id="PS51002">
    <property type="entry name" value="CYTB_NTER"/>
    <property type="match status" value="1"/>
</dbReference>
<gene>
    <name type="primary">MT-CYB</name>
    <name type="synonym">COB</name>
    <name type="synonym">CYTB</name>
    <name type="synonym">MTCYB</name>
</gene>
<evidence type="ECO:0000250" key="1"/>
<evidence type="ECO:0000250" key="2">
    <source>
        <dbReference type="UniProtKB" id="P00157"/>
    </source>
</evidence>
<evidence type="ECO:0000255" key="3">
    <source>
        <dbReference type="PROSITE-ProRule" id="PRU00967"/>
    </source>
</evidence>
<evidence type="ECO:0000255" key="4">
    <source>
        <dbReference type="PROSITE-ProRule" id="PRU00968"/>
    </source>
</evidence>
<keyword id="KW-0249">Electron transport</keyword>
<keyword id="KW-0349">Heme</keyword>
<keyword id="KW-0408">Iron</keyword>
<keyword id="KW-0472">Membrane</keyword>
<keyword id="KW-0479">Metal-binding</keyword>
<keyword id="KW-0496">Mitochondrion</keyword>
<keyword id="KW-0999">Mitochondrion inner membrane</keyword>
<keyword id="KW-0679">Respiratory chain</keyword>
<keyword id="KW-0812">Transmembrane</keyword>
<keyword id="KW-1133">Transmembrane helix</keyword>
<keyword id="KW-0813">Transport</keyword>
<keyword id="KW-0830">Ubiquinone</keyword>
<proteinExistence type="inferred from homology"/>
<protein>
    <recommendedName>
        <fullName>Cytochrome b</fullName>
    </recommendedName>
    <alternativeName>
        <fullName>Complex III subunit 3</fullName>
    </alternativeName>
    <alternativeName>
        <fullName>Complex III subunit III</fullName>
    </alternativeName>
    <alternativeName>
        <fullName>Cytochrome b-c1 complex subunit 3</fullName>
    </alternativeName>
    <alternativeName>
        <fullName>Ubiquinol-cytochrome-c reductase complex cytochrome b subunit</fullName>
    </alternativeName>
</protein>
<feature type="chain" id="PRO_0000257948" description="Cytochrome b">
    <location>
        <begin position="1"/>
        <end position="379"/>
    </location>
</feature>
<feature type="transmembrane region" description="Helical" evidence="2">
    <location>
        <begin position="33"/>
        <end position="53"/>
    </location>
</feature>
<feature type="transmembrane region" description="Helical" evidence="2">
    <location>
        <begin position="77"/>
        <end position="98"/>
    </location>
</feature>
<feature type="transmembrane region" description="Helical" evidence="2">
    <location>
        <begin position="113"/>
        <end position="133"/>
    </location>
</feature>
<feature type="transmembrane region" description="Helical" evidence="2">
    <location>
        <begin position="178"/>
        <end position="198"/>
    </location>
</feature>
<feature type="transmembrane region" description="Helical" evidence="2">
    <location>
        <begin position="226"/>
        <end position="246"/>
    </location>
</feature>
<feature type="transmembrane region" description="Helical" evidence="2">
    <location>
        <begin position="288"/>
        <end position="308"/>
    </location>
</feature>
<feature type="transmembrane region" description="Helical" evidence="2">
    <location>
        <begin position="320"/>
        <end position="340"/>
    </location>
</feature>
<feature type="transmembrane region" description="Helical" evidence="2">
    <location>
        <begin position="347"/>
        <end position="367"/>
    </location>
</feature>
<feature type="binding site" description="axial binding residue" evidence="2">
    <location>
        <position position="83"/>
    </location>
    <ligand>
        <name>heme b</name>
        <dbReference type="ChEBI" id="CHEBI:60344"/>
        <label>b562</label>
    </ligand>
    <ligandPart>
        <name>Fe</name>
        <dbReference type="ChEBI" id="CHEBI:18248"/>
    </ligandPart>
</feature>
<feature type="binding site" description="axial binding residue" evidence="2">
    <location>
        <position position="97"/>
    </location>
    <ligand>
        <name>heme b</name>
        <dbReference type="ChEBI" id="CHEBI:60344"/>
        <label>b566</label>
    </ligand>
    <ligandPart>
        <name>Fe</name>
        <dbReference type="ChEBI" id="CHEBI:18248"/>
    </ligandPart>
</feature>
<feature type="binding site" description="axial binding residue" evidence="2">
    <location>
        <position position="182"/>
    </location>
    <ligand>
        <name>heme b</name>
        <dbReference type="ChEBI" id="CHEBI:60344"/>
        <label>b562</label>
    </ligand>
    <ligandPart>
        <name>Fe</name>
        <dbReference type="ChEBI" id="CHEBI:18248"/>
    </ligandPart>
</feature>
<feature type="binding site" description="axial binding residue" evidence="2">
    <location>
        <position position="196"/>
    </location>
    <ligand>
        <name>heme b</name>
        <dbReference type="ChEBI" id="CHEBI:60344"/>
        <label>b566</label>
    </ligand>
    <ligandPart>
        <name>Fe</name>
        <dbReference type="ChEBI" id="CHEBI:18248"/>
    </ligandPart>
</feature>
<feature type="binding site" evidence="2">
    <location>
        <position position="201"/>
    </location>
    <ligand>
        <name>a ubiquinone</name>
        <dbReference type="ChEBI" id="CHEBI:16389"/>
    </ligand>
</feature>
<sequence length="379" mass="43068">MTNIRKTHPLIKIINHSFIDLPAPSNISAWWNFGSLLGICLIIQILTGLFLAMHYTSDTMTAFSSVTHICRDVNYGWLIRYMHANGASMFFICLFLHVGRGLYYGSYTYFETWNIGVILLFAVMATAFMGYVLPWGQMSFWGATVITNLLSAIPYIGTTLVEWIWGGFSVDKATLTRFFAFHFILPFIITALVMVHLLFLHETGSNNPSGLISDSDKIPFHPYYTIKDILGILLLILVLMILVLFSPDLLGDPDNYTPANPLSTPPHIKPEWYFLFAYAILRSIPNKLGGVLALVLSILILMLFPILHMSKQRSMMFRPLSQCMFWILVADLFTLTWIGGQPVEYPFIIIGQLASILYFMIILLILPAISLFENKLLKW</sequence>